<keyword id="KW-0067">ATP-binding</keyword>
<keyword id="KW-0963">Cytoplasm</keyword>
<keyword id="KW-0256">Endoplasmic reticulum</keyword>
<keyword id="KW-0333">Golgi apparatus</keyword>
<keyword id="KW-0472">Membrane</keyword>
<keyword id="KW-0479">Metal-binding</keyword>
<keyword id="KW-0547">Nucleotide-binding</keyword>
<keyword id="KW-0539">Nucleus</keyword>
<keyword id="KW-1185">Reference proteome</keyword>
<keyword id="KW-0833">Ubl conjugation pathway</keyword>
<keyword id="KW-0862">Zinc</keyword>
<dbReference type="EMBL" id="GG666565">
    <property type="protein sequence ID" value="EEN54559.1"/>
    <property type="molecule type" value="Genomic_DNA"/>
</dbReference>
<dbReference type="RefSeq" id="XP_002598547.1">
    <property type="nucleotide sequence ID" value="XM_002598501.1"/>
</dbReference>
<dbReference type="SMR" id="C3YZ51"/>
<dbReference type="FunCoup" id="C3YZ51">
    <property type="interactions" value="571"/>
</dbReference>
<dbReference type="STRING" id="7739.C3YZ51"/>
<dbReference type="eggNOG" id="KOG2336">
    <property type="taxonomic scope" value="Eukaryota"/>
</dbReference>
<dbReference type="InParanoid" id="C3YZ51"/>
<dbReference type="OMA" id="MNIVKDY"/>
<dbReference type="OrthoDB" id="206053at2759"/>
<dbReference type="Proteomes" id="UP000001554">
    <property type="component" value="Unplaced"/>
</dbReference>
<dbReference type="GO" id="GO:0005737">
    <property type="term" value="C:cytoplasm"/>
    <property type="evidence" value="ECO:0000318"/>
    <property type="project" value="GO_Central"/>
</dbReference>
<dbReference type="GO" id="GO:0005829">
    <property type="term" value="C:cytosol"/>
    <property type="evidence" value="ECO:0000318"/>
    <property type="project" value="GO_Central"/>
</dbReference>
<dbReference type="GO" id="GO:0005789">
    <property type="term" value="C:endoplasmic reticulum membrane"/>
    <property type="evidence" value="ECO:0007669"/>
    <property type="project" value="UniProtKB-SubCell"/>
</dbReference>
<dbReference type="GO" id="GO:0005794">
    <property type="term" value="C:Golgi apparatus"/>
    <property type="evidence" value="ECO:0007669"/>
    <property type="project" value="UniProtKB-SubCell"/>
</dbReference>
<dbReference type="GO" id="GO:0005634">
    <property type="term" value="C:nucleus"/>
    <property type="evidence" value="ECO:0007669"/>
    <property type="project" value="UniProtKB-SubCell"/>
</dbReference>
<dbReference type="GO" id="GO:0005524">
    <property type="term" value="F:ATP binding"/>
    <property type="evidence" value="ECO:0007669"/>
    <property type="project" value="UniProtKB-KW"/>
</dbReference>
<dbReference type="GO" id="GO:0046872">
    <property type="term" value="F:metal ion binding"/>
    <property type="evidence" value="ECO:0007669"/>
    <property type="project" value="UniProtKB-KW"/>
</dbReference>
<dbReference type="GO" id="GO:0071566">
    <property type="term" value="F:UFM1 activating enzyme activity"/>
    <property type="evidence" value="ECO:0000318"/>
    <property type="project" value="GO_Central"/>
</dbReference>
<dbReference type="GO" id="GO:0071569">
    <property type="term" value="P:protein ufmylation"/>
    <property type="evidence" value="ECO:0000318"/>
    <property type="project" value="GO_Central"/>
</dbReference>
<dbReference type="CDD" id="cd00757">
    <property type="entry name" value="ThiF_MoeB_HesA_family"/>
    <property type="match status" value="1"/>
</dbReference>
<dbReference type="FunFam" id="3.40.50.720:FF:000066">
    <property type="entry name" value="Putative ubiquitin-like modifier-activating enzyme 5"/>
    <property type="match status" value="1"/>
</dbReference>
<dbReference type="Gene3D" id="3.40.50.720">
    <property type="entry name" value="NAD(P)-binding Rossmann-like Domain"/>
    <property type="match status" value="1"/>
</dbReference>
<dbReference type="InterPro" id="IPR029752">
    <property type="entry name" value="D-isomer_DH_CS1"/>
</dbReference>
<dbReference type="InterPro" id="IPR045886">
    <property type="entry name" value="ThiF/MoeB/HesA"/>
</dbReference>
<dbReference type="InterPro" id="IPR000594">
    <property type="entry name" value="ThiF_NAD_FAD-bd"/>
</dbReference>
<dbReference type="InterPro" id="IPR035985">
    <property type="entry name" value="Ubiquitin-activating_enz"/>
</dbReference>
<dbReference type="PANTHER" id="PTHR10953">
    <property type="entry name" value="UBIQUITIN-ACTIVATING ENZYME E1"/>
    <property type="match status" value="1"/>
</dbReference>
<dbReference type="PANTHER" id="PTHR10953:SF9">
    <property type="entry name" value="UBIQUITIN-LIKE MODIFIER-ACTIVATING ENZYME 5"/>
    <property type="match status" value="1"/>
</dbReference>
<dbReference type="Pfam" id="PF00899">
    <property type="entry name" value="ThiF"/>
    <property type="match status" value="1"/>
</dbReference>
<dbReference type="SUPFAM" id="SSF69572">
    <property type="entry name" value="Activating enzymes of the ubiquitin-like proteins"/>
    <property type="match status" value="1"/>
</dbReference>
<name>UBA5_BRAFL</name>
<proteinExistence type="inferred from homology"/>
<comment type="function">
    <text evidence="1">E1-like enzyme which specifically catalyzes the first step in ufmylation. Activates UFM1 by first adenylating its C-terminal glycine residue with ATP, and thereafter linking this residue to the side chain of a cysteine residue in E1, yielding a UFM1-E1 thioester and free AMP. Activates UFM1 via a trans-binding mechanism, in which UFM1 interacts with distinct sites in both subunits of the UBA5 homodimer. Trans-binding also promotes stabilization of the UBA5 homodimer, and enhances ATP-binding. Transfer of UFM1 from UBA5 to the E2-like enzyme UFC1 also takes place using a trans mechanism.</text>
</comment>
<comment type="subunit">
    <text evidence="1">Homodimer; homodimerization is required for UFM1 activation. Interacts (via UIS motif) with UFM1; binds UFM1 via a trans-binding mechanism in which UFM1 interacts with distinct sites in both subunits of the UBA5 homodimer. Interacts (via C-terminus) with UFC1.</text>
</comment>
<comment type="subcellular location">
    <subcellularLocation>
        <location evidence="1">Cytoplasm</location>
    </subcellularLocation>
    <subcellularLocation>
        <location evidence="1">Nucleus</location>
    </subcellularLocation>
    <subcellularLocation>
        <location evidence="1">Endoplasmic reticulum membrane</location>
    </subcellularLocation>
    <subcellularLocation>
        <location evidence="1">Golgi apparatus</location>
    </subcellularLocation>
</comment>
<comment type="domain">
    <text evidence="1">The UFC1-binding sequence (UFC) motif mediates interaction with UFC1.</text>
</comment>
<comment type="domain">
    <text evidence="1">The linker region is required to activate the active site of UFC1: it region moves next to active site of UFC1 to reduce the amount of water molecules in the vicinity of UFC1's active site and thereby elevate the nucleophilic activity of UFC1 active site.</text>
</comment>
<comment type="similarity">
    <text evidence="3">Belongs to the ubiquitin-activating E1 family. UBA5 subfamily.</text>
</comment>
<organism>
    <name type="scientific">Branchiostoma floridae</name>
    <name type="common">Florida lancelet</name>
    <name type="synonym">Amphioxus</name>
    <dbReference type="NCBI Taxonomy" id="7739"/>
    <lineage>
        <taxon>Eukaryota</taxon>
        <taxon>Metazoa</taxon>
        <taxon>Chordata</taxon>
        <taxon>Cephalochordata</taxon>
        <taxon>Leptocardii</taxon>
        <taxon>Amphioxiformes</taxon>
        <taxon>Branchiostomatidae</taxon>
        <taxon>Branchiostoma</taxon>
    </lineage>
</organism>
<reference key="1">
    <citation type="journal article" date="2008" name="Nature">
        <title>The amphioxus genome and the evolution of the chordate karyotype.</title>
        <authorList>
            <person name="Putnam N.H."/>
            <person name="Butts T."/>
            <person name="Ferrier D.E.K."/>
            <person name="Furlong R.F."/>
            <person name="Hellsten U."/>
            <person name="Kawashima T."/>
            <person name="Robinson-Rechavi M."/>
            <person name="Shoguchi E."/>
            <person name="Terry A."/>
            <person name="Yu J.-K."/>
            <person name="Benito-Gutierrez E.L."/>
            <person name="Dubchak I."/>
            <person name="Garcia-Fernandez J."/>
            <person name="Gibson-Brown J.J."/>
            <person name="Grigoriev I.V."/>
            <person name="Horton A.C."/>
            <person name="de Jong P.J."/>
            <person name="Jurka J."/>
            <person name="Kapitonov V.V."/>
            <person name="Kohara Y."/>
            <person name="Kuroki Y."/>
            <person name="Lindquist E."/>
            <person name="Lucas S."/>
            <person name="Osoegawa K."/>
            <person name="Pennacchio L.A."/>
            <person name="Salamov A.A."/>
            <person name="Satou Y."/>
            <person name="Sauka-Spengler T."/>
            <person name="Schmutz J."/>
            <person name="Shin-I T."/>
            <person name="Toyoda A."/>
            <person name="Bronner-Fraser M."/>
            <person name="Fujiyama A."/>
            <person name="Holland L.Z."/>
            <person name="Holland P.W.H."/>
            <person name="Satoh N."/>
            <person name="Rokhsar D.S."/>
        </authorList>
    </citation>
    <scope>NUCLEOTIDE SEQUENCE [LARGE SCALE GENOMIC DNA]</scope>
    <source>
        <strain>S238N-H82</strain>
        <tissue>Testis</tissue>
    </source>
</reference>
<accession>C3YZ51</accession>
<evidence type="ECO:0000250" key="1">
    <source>
        <dbReference type="UniProtKB" id="Q9GZZ9"/>
    </source>
</evidence>
<evidence type="ECO:0000256" key="2">
    <source>
        <dbReference type="SAM" id="MobiDB-lite"/>
    </source>
</evidence>
<evidence type="ECO:0000305" key="3"/>
<gene>
    <name type="ORF">BRAFLDRAFT_113714</name>
</gene>
<sequence length="405" mass="44879">MATVEELQTRVKQLEEELERERTRNRGGTDGGGGRKKIDQMSSEVVDSNPYSRLMALKRMGIVDNYERIRDFTVAIVGVGGVGSVTAEMLTRCGIGKLLLFDYDKVELANMNRLFFQPHQAGLSKVQAAEITLRDINPDVEFETHNYNITTVDNFQHFMDRISHGHLKGDRPVDLVLSCVDNFEARMAINTACNEQGQVWIESGVSENAVSGHIQVIKPGETACFACAPPLVVASGIDEKTLKREGVCAASLPTTMGIVAGFLVQNTLKYLLEFGSVTYYLGYNAMQDFFPSMAMKPNPNCDDSFCTKLQTEYQEKLLAQPKEEAKEETVEEVVHDANDWGIELVAETTEEELKAASHGHVPELVEGVHVAYVRPMTQEDEEGAAGLTVDDQESLEDLMAKMKSI</sequence>
<feature type="chain" id="PRO_0000391935" description="Ubiquitin-like modifier-activating enzyme 5">
    <location>
        <begin position="1"/>
        <end position="405"/>
    </location>
</feature>
<feature type="region of interest" description="Disordered" evidence="2">
    <location>
        <begin position="1"/>
        <end position="44"/>
    </location>
</feature>
<feature type="region of interest" description="Linker" evidence="1">
    <location>
        <begin position="346"/>
        <end position="377"/>
    </location>
</feature>
<feature type="short sequence motif" description="UFC1-binding sequence (UFC)" evidence="1">
    <location>
        <begin position="390"/>
        <end position="405"/>
    </location>
</feature>
<feature type="compositionally biased region" description="Basic and acidic residues" evidence="2">
    <location>
        <begin position="7"/>
        <end position="24"/>
    </location>
</feature>
<feature type="active site" description="Glycyl thioester intermediate" evidence="1">
    <location>
        <position position="248"/>
    </location>
</feature>
<feature type="binding site" evidence="1">
    <location>
        <position position="81"/>
    </location>
    <ligand>
        <name>ATP</name>
        <dbReference type="ChEBI" id="CHEBI:30616"/>
    </ligand>
</feature>
<feature type="binding site" evidence="1">
    <location>
        <position position="102"/>
    </location>
    <ligand>
        <name>ATP</name>
        <dbReference type="ChEBI" id="CHEBI:30616"/>
    </ligand>
</feature>
<feature type="binding site" evidence="1">
    <location>
        <position position="125"/>
    </location>
    <ligand>
        <name>ATP</name>
        <dbReference type="ChEBI" id="CHEBI:30616"/>
    </ligand>
</feature>
<feature type="binding site" evidence="1">
    <location>
        <position position="148"/>
    </location>
    <ligand>
        <name>ATP</name>
        <dbReference type="ChEBI" id="CHEBI:30616"/>
    </ligand>
</feature>
<feature type="binding site" evidence="1">
    <location>
        <position position="182"/>
    </location>
    <ligand>
        <name>ATP</name>
        <dbReference type="ChEBI" id="CHEBI:30616"/>
    </ligand>
</feature>
<feature type="binding site" evidence="1">
    <location>
        <position position="224"/>
    </location>
    <ligand>
        <name>Zn(2+)</name>
        <dbReference type="ChEBI" id="CHEBI:29105"/>
    </ligand>
</feature>
<feature type="binding site" evidence="1">
    <location>
        <position position="227"/>
    </location>
    <ligand>
        <name>Zn(2+)</name>
        <dbReference type="ChEBI" id="CHEBI:29105"/>
    </ligand>
</feature>
<feature type="binding site" evidence="1">
    <location>
        <position position="301"/>
    </location>
    <ligand>
        <name>Zn(2+)</name>
        <dbReference type="ChEBI" id="CHEBI:29105"/>
    </ligand>
</feature>
<feature type="binding site" evidence="1">
    <location>
        <position position="306"/>
    </location>
    <ligand>
        <name>Zn(2+)</name>
        <dbReference type="ChEBI" id="CHEBI:29105"/>
    </ligand>
</feature>
<protein>
    <recommendedName>
        <fullName>Ubiquitin-like modifier-activating enzyme 5</fullName>
        <shortName>Ubiquitin-activating enzyme 5</shortName>
    </recommendedName>
</protein>